<proteinExistence type="evidence at transcript level"/>
<reference key="1">
    <citation type="journal article" date="1997" name="Plant Mol. Biol.">
        <title>Restoration of TATA-dependent transcription in a heat-inactivated extract of tobacco nuclei by recombinant TATA-binding protein (TBP) from tobacco.</title>
        <authorList>
            <person name="Iwataki N."/>
            <person name="Hoya A."/>
            <person name="Yamazaki K."/>
        </authorList>
    </citation>
    <scope>NUCLEOTIDE SEQUENCE [MRNA]</scope>
    <source>
        <strain>cv. Bright Yellow 2</strain>
    </source>
</reference>
<name>TBP_TOBAC</name>
<accession>P93348</accession>
<organism>
    <name type="scientific">Nicotiana tabacum</name>
    <name type="common">Common tobacco</name>
    <dbReference type="NCBI Taxonomy" id="4097"/>
    <lineage>
        <taxon>Eukaryota</taxon>
        <taxon>Viridiplantae</taxon>
        <taxon>Streptophyta</taxon>
        <taxon>Embryophyta</taxon>
        <taxon>Tracheophyta</taxon>
        <taxon>Spermatophyta</taxon>
        <taxon>Magnoliopsida</taxon>
        <taxon>eudicotyledons</taxon>
        <taxon>Gunneridae</taxon>
        <taxon>Pentapetalae</taxon>
        <taxon>asterids</taxon>
        <taxon>lamiids</taxon>
        <taxon>Solanales</taxon>
        <taxon>Solanaceae</taxon>
        <taxon>Nicotianoideae</taxon>
        <taxon>Nicotianeae</taxon>
        <taxon>Nicotiana</taxon>
    </lineage>
</organism>
<protein>
    <recommendedName>
        <fullName>TATA-box-binding protein</fullName>
    </recommendedName>
    <alternativeName>
        <fullName>TATA sequence-binding protein</fullName>
        <shortName>TBP</shortName>
    </alternativeName>
    <alternativeName>
        <fullName>TATA-binding factor</fullName>
    </alternativeName>
    <alternativeName>
        <fullName>TATA-box factor</fullName>
    </alternativeName>
    <alternativeName>
        <fullName>Transcription initiation factor TFIID TBP subunit</fullName>
    </alternativeName>
</protein>
<evidence type="ECO:0000305" key="1"/>
<dbReference type="EMBL" id="D86722">
    <property type="protein sequence ID" value="BAA13156.1"/>
    <property type="molecule type" value="mRNA"/>
</dbReference>
<dbReference type="RefSeq" id="NP_001312392.1">
    <property type="nucleotide sequence ID" value="NM_001325463.1"/>
</dbReference>
<dbReference type="RefSeq" id="XP_016466344.1">
    <property type="nucleotide sequence ID" value="XM_016610858.1"/>
</dbReference>
<dbReference type="SMR" id="P93348"/>
<dbReference type="STRING" id="4097.P93348"/>
<dbReference type="PaxDb" id="4097-P93348"/>
<dbReference type="GeneID" id="107789091"/>
<dbReference type="KEGG" id="nta:107789091"/>
<dbReference type="OMA" id="YTTATIW"/>
<dbReference type="OrthoDB" id="1214461at2759"/>
<dbReference type="PhylomeDB" id="P93348"/>
<dbReference type="Proteomes" id="UP000084051">
    <property type="component" value="Unplaced"/>
</dbReference>
<dbReference type="GO" id="GO:0005634">
    <property type="term" value="C:nucleus"/>
    <property type="evidence" value="ECO:0007669"/>
    <property type="project" value="UniProtKB-SubCell"/>
</dbReference>
<dbReference type="GO" id="GO:0003677">
    <property type="term" value="F:DNA binding"/>
    <property type="evidence" value="ECO:0007669"/>
    <property type="project" value="UniProtKB-KW"/>
</dbReference>
<dbReference type="GO" id="GO:0016251">
    <property type="term" value="F:RNA polymerase II general transcription initiation factor activity"/>
    <property type="evidence" value="ECO:0000318"/>
    <property type="project" value="GO_Central"/>
</dbReference>
<dbReference type="GO" id="GO:0006352">
    <property type="term" value="P:DNA-templated transcription initiation"/>
    <property type="evidence" value="ECO:0000318"/>
    <property type="project" value="GO_Central"/>
</dbReference>
<dbReference type="CDD" id="cd04516">
    <property type="entry name" value="TBP_eukaryotes"/>
    <property type="match status" value="1"/>
</dbReference>
<dbReference type="FunFam" id="3.30.310.10:FF:000001">
    <property type="entry name" value="TATA-box-binding protein 2"/>
    <property type="match status" value="1"/>
</dbReference>
<dbReference type="FunFam" id="3.30.310.10:FF:000002">
    <property type="entry name" value="TATA-box-binding protein 2"/>
    <property type="match status" value="1"/>
</dbReference>
<dbReference type="Gene3D" id="3.30.310.10">
    <property type="entry name" value="TATA-Binding Protein"/>
    <property type="match status" value="2"/>
</dbReference>
<dbReference type="HAMAP" id="MF_00408">
    <property type="entry name" value="TATA_bind_prot_arch"/>
    <property type="match status" value="1"/>
</dbReference>
<dbReference type="InterPro" id="IPR000814">
    <property type="entry name" value="TBP"/>
</dbReference>
<dbReference type="InterPro" id="IPR030491">
    <property type="entry name" value="TBP_CS"/>
</dbReference>
<dbReference type="InterPro" id="IPR012295">
    <property type="entry name" value="TBP_dom_sf"/>
</dbReference>
<dbReference type="InterPro" id="IPR033710">
    <property type="entry name" value="TBP_eukaryotic"/>
</dbReference>
<dbReference type="PANTHER" id="PTHR10126">
    <property type="entry name" value="TATA-BOX BINDING PROTEIN"/>
    <property type="match status" value="1"/>
</dbReference>
<dbReference type="Pfam" id="PF00352">
    <property type="entry name" value="TBP"/>
    <property type="match status" value="2"/>
</dbReference>
<dbReference type="PRINTS" id="PR00686">
    <property type="entry name" value="TIFACTORIID"/>
</dbReference>
<dbReference type="SUPFAM" id="SSF55945">
    <property type="entry name" value="TATA-box binding protein-like"/>
    <property type="match status" value="2"/>
</dbReference>
<dbReference type="PROSITE" id="PS00351">
    <property type="entry name" value="TFIID"/>
    <property type="match status" value="2"/>
</dbReference>
<keyword id="KW-0238">DNA-binding</keyword>
<keyword id="KW-0539">Nucleus</keyword>
<keyword id="KW-1185">Reference proteome</keyword>
<keyword id="KW-0677">Repeat</keyword>
<keyword id="KW-0804">Transcription</keyword>
<sequence length="200" mass="22302">MAEVGLEGNQPVDLSKHPSGIVPTLQNIVSTVNLDCKLDLKAIALQARNAEYNPKRFAAVIMRIREPKTTALIFASGKMVCTGAKSEQSSKLAARKYARIIQKLGFDAKFKDFKIQNIVGSCDVKFPIRLEGLAYSHGAFSSYEPELFPGLIYRMKQPKIVLLIFVSGKIVLTGAKVRDETYTAFENIYPVLTEFRKNQQ</sequence>
<feature type="chain" id="PRO_0000153984" description="TATA-box-binding protein">
    <location>
        <begin position="1"/>
        <end position="200"/>
    </location>
</feature>
<feature type="repeat" description="1">
    <location>
        <begin position="25"/>
        <end position="101"/>
    </location>
</feature>
<feature type="repeat" description="2">
    <location>
        <begin position="115"/>
        <end position="192"/>
    </location>
</feature>
<comment type="function">
    <text>General transcription factor that functions at the core of the DNA-binding multiprotein factor TFIID. Binding of TFIID to the TATA box is the initial transcriptional step of the pre-initiation complex (PIC), playing a role in the activation of eukaryotic genes transcribed by RNA polymerase II.</text>
</comment>
<comment type="subunit">
    <text>Belongs to the TFIID complex together with the TBP-associated factors (TAFs). Binds DNA as monomer.</text>
</comment>
<comment type="subcellular location">
    <subcellularLocation>
        <location>Nucleus</location>
    </subcellularLocation>
</comment>
<comment type="similarity">
    <text evidence="1">Belongs to the TBP family.</text>
</comment>